<proteinExistence type="inferred from homology"/>
<protein>
    <recommendedName>
        <fullName evidence="1">Chaperone protein DnaK</fullName>
    </recommendedName>
    <alternativeName>
        <fullName evidence="1">HSP70</fullName>
    </alternativeName>
    <alternativeName>
        <fullName evidence="1">Heat shock 70 kDa protein</fullName>
    </alternativeName>
    <alternativeName>
        <fullName evidence="1">Heat shock protein 70</fullName>
    </alternativeName>
</protein>
<evidence type="ECO:0000255" key="1">
    <source>
        <dbReference type="HAMAP-Rule" id="MF_00332"/>
    </source>
</evidence>
<evidence type="ECO:0000256" key="2">
    <source>
        <dbReference type="SAM" id="MobiDB-lite"/>
    </source>
</evidence>
<accession>B7H317</accession>
<dbReference type="EMBL" id="CP001172">
    <property type="protein sequence ID" value="ACJ58774.1"/>
    <property type="molecule type" value="Genomic_DNA"/>
</dbReference>
<dbReference type="RefSeq" id="WP_001062607.1">
    <property type="nucleotide sequence ID" value="NZ_CP001172.1"/>
</dbReference>
<dbReference type="SMR" id="B7H317"/>
<dbReference type="HOGENOM" id="CLU_005965_2_4_6"/>
<dbReference type="Proteomes" id="UP000006924">
    <property type="component" value="Chromosome"/>
</dbReference>
<dbReference type="GO" id="GO:0005524">
    <property type="term" value="F:ATP binding"/>
    <property type="evidence" value="ECO:0007669"/>
    <property type="project" value="UniProtKB-UniRule"/>
</dbReference>
<dbReference type="GO" id="GO:0140662">
    <property type="term" value="F:ATP-dependent protein folding chaperone"/>
    <property type="evidence" value="ECO:0007669"/>
    <property type="project" value="InterPro"/>
</dbReference>
<dbReference type="GO" id="GO:0051082">
    <property type="term" value="F:unfolded protein binding"/>
    <property type="evidence" value="ECO:0007669"/>
    <property type="project" value="InterPro"/>
</dbReference>
<dbReference type="CDD" id="cd10234">
    <property type="entry name" value="ASKHA_NBD_HSP70_DnaK-like"/>
    <property type="match status" value="1"/>
</dbReference>
<dbReference type="FunFam" id="2.60.34.10:FF:000014">
    <property type="entry name" value="Chaperone protein DnaK HSP70"/>
    <property type="match status" value="1"/>
</dbReference>
<dbReference type="FunFam" id="1.20.1270.10:FF:000001">
    <property type="entry name" value="Molecular chaperone DnaK"/>
    <property type="match status" value="1"/>
</dbReference>
<dbReference type="FunFam" id="3.30.420.40:FF:000004">
    <property type="entry name" value="Molecular chaperone DnaK"/>
    <property type="match status" value="1"/>
</dbReference>
<dbReference type="FunFam" id="3.90.640.10:FF:000003">
    <property type="entry name" value="Molecular chaperone DnaK"/>
    <property type="match status" value="1"/>
</dbReference>
<dbReference type="Gene3D" id="1.20.1270.10">
    <property type="match status" value="1"/>
</dbReference>
<dbReference type="Gene3D" id="3.30.420.40">
    <property type="match status" value="2"/>
</dbReference>
<dbReference type="Gene3D" id="3.90.640.10">
    <property type="entry name" value="Actin, Chain A, domain 4"/>
    <property type="match status" value="1"/>
</dbReference>
<dbReference type="Gene3D" id="2.60.34.10">
    <property type="entry name" value="Substrate Binding Domain Of DNAk, Chain A, domain 1"/>
    <property type="match status" value="1"/>
</dbReference>
<dbReference type="HAMAP" id="MF_00332">
    <property type="entry name" value="DnaK"/>
    <property type="match status" value="1"/>
</dbReference>
<dbReference type="InterPro" id="IPR043129">
    <property type="entry name" value="ATPase_NBD"/>
</dbReference>
<dbReference type="InterPro" id="IPR012725">
    <property type="entry name" value="Chaperone_DnaK"/>
</dbReference>
<dbReference type="InterPro" id="IPR018181">
    <property type="entry name" value="Heat_shock_70_CS"/>
</dbReference>
<dbReference type="InterPro" id="IPR029048">
    <property type="entry name" value="HSP70_C_sf"/>
</dbReference>
<dbReference type="InterPro" id="IPR029047">
    <property type="entry name" value="HSP70_peptide-bd_sf"/>
</dbReference>
<dbReference type="InterPro" id="IPR013126">
    <property type="entry name" value="Hsp_70_fam"/>
</dbReference>
<dbReference type="NCBIfam" id="NF001413">
    <property type="entry name" value="PRK00290.1"/>
    <property type="match status" value="1"/>
</dbReference>
<dbReference type="NCBIfam" id="TIGR02350">
    <property type="entry name" value="prok_dnaK"/>
    <property type="match status" value="1"/>
</dbReference>
<dbReference type="PANTHER" id="PTHR19375">
    <property type="entry name" value="HEAT SHOCK PROTEIN 70KDA"/>
    <property type="match status" value="1"/>
</dbReference>
<dbReference type="Pfam" id="PF00012">
    <property type="entry name" value="HSP70"/>
    <property type="match status" value="1"/>
</dbReference>
<dbReference type="PRINTS" id="PR00301">
    <property type="entry name" value="HEATSHOCK70"/>
</dbReference>
<dbReference type="SUPFAM" id="SSF53067">
    <property type="entry name" value="Actin-like ATPase domain"/>
    <property type="match status" value="2"/>
</dbReference>
<dbReference type="SUPFAM" id="SSF100934">
    <property type="entry name" value="Heat shock protein 70kD (HSP70), C-terminal subdomain"/>
    <property type="match status" value="1"/>
</dbReference>
<dbReference type="SUPFAM" id="SSF100920">
    <property type="entry name" value="Heat shock protein 70kD (HSP70), peptide-binding domain"/>
    <property type="match status" value="1"/>
</dbReference>
<dbReference type="PROSITE" id="PS00297">
    <property type="entry name" value="HSP70_1"/>
    <property type="match status" value="1"/>
</dbReference>
<dbReference type="PROSITE" id="PS00329">
    <property type="entry name" value="HSP70_2"/>
    <property type="match status" value="1"/>
</dbReference>
<dbReference type="PROSITE" id="PS01036">
    <property type="entry name" value="HSP70_3"/>
    <property type="match status" value="1"/>
</dbReference>
<name>DNAK_ACIB3</name>
<gene>
    <name evidence="1" type="primary">dnaK</name>
    <name type="ordered locus">ABBFA_003505</name>
</gene>
<comment type="function">
    <text evidence="1">Acts as a chaperone.</text>
</comment>
<comment type="induction">
    <text evidence="1">By stress conditions e.g. heat shock.</text>
</comment>
<comment type="similarity">
    <text evidence="1">Belongs to the heat shock protein 70 family.</text>
</comment>
<sequence length="646" mass="69432">MAKIIGIDLGTTNSCVAVLEGDKVKVIENAEGARTTPSIIAYKDGEILVGQSAKRQAVTNPKNTLFAIKRLIGRRYEDQAVQKDIGLVPYKIIKADNGDAWVEVNDKKLAPQQISAEILKKMKKTAEDYLGETVTEAVITVPAYFNDAQRQATKDAGKIAGLDVKRIINEPTAAALAFGMDKKEGDRKVAVYDLGGGTFDVSIIEIADLDGDQQIEVLSTNGDTFLGGEDFDNALIEYLVEEFKKEQNVNLKNDPLALQRLKEAAEKAKIELSSSNATEINLPYITADATGPKHLVINVTRAKLEGLVADLVARTIEPCKIALKDAGLSTSDISDVILVGGQSRMPLVQQKVQEFFGREPRKDVNPDEAVAIGAAIQGAVLSGDKNDVLLLDVTPLTLGIETMGGVLTPIIEKNTTIPAKKSQVFSTAADNQPAVDISVYQGERKMAQQNKLLGNFQLGDIPPAPRGVPQIEVSFDINADGILKVSAKDKSTGKEQSIQIKANSGLSDAEIEAMIKDAEANAEEDRKFEELAKARNEADALISSSNKAVKDLGDKVTEDEKTAVNTAVSELEAATKENDVEVIKAKTEALQNILMPITQRAYEQAQQAGGAEGFDPNAFQGGDAGQQKADDGVVDAEFTEVKDDKK</sequence>
<keyword id="KW-0067">ATP-binding</keyword>
<keyword id="KW-0143">Chaperone</keyword>
<keyword id="KW-0547">Nucleotide-binding</keyword>
<keyword id="KW-0597">Phosphoprotein</keyword>
<keyword id="KW-0346">Stress response</keyword>
<reference key="1">
    <citation type="journal article" date="2008" name="J. Bacteriol.">
        <title>Comparative genome sequence analysis of multidrug-resistant Acinetobacter baumannii.</title>
        <authorList>
            <person name="Adams M.D."/>
            <person name="Goglin K."/>
            <person name="Molyneaux N."/>
            <person name="Hujer K.M."/>
            <person name="Lavender H."/>
            <person name="Jamison J.J."/>
            <person name="MacDonald I.J."/>
            <person name="Martin K.M."/>
            <person name="Russo T."/>
            <person name="Campagnari A.A."/>
            <person name="Hujer A.M."/>
            <person name="Bonomo R.A."/>
            <person name="Gill S.R."/>
        </authorList>
    </citation>
    <scope>NUCLEOTIDE SEQUENCE [LARGE SCALE GENOMIC DNA]</scope>
    <source>
        <strain>AB307-0294</strain>
    </source>
</reference>
<organism>
    <name type="scientific">Acinetobacter baumannii (strain AB307-0294)</name>
    <dbReference type="NCBI Taxonomy" id="557600"/>
    <lineage>
        <taxon>Bacteria</taxon>
        <taxon>Pseudomonadati</taxon>
        <taxon>Pseudomonadota</taxon>
        <taxon>Gammaproteobacteria</taxon>
        <taxon>Moraxellales</taxon>
        <taxon>Moraxellaceae</taxon>
        <taxon>Acinetobacter</taxon>
        <taxon>Acinetobacter calcoaceticus/baumannii complex</taxon>
    </lineage>
</organism>
<feature type="chain" id="PRO_1000119651" description="Chaperone protein DnaK">
    <location>
        <begin position="1"/>
        <end position="646"/>
    </location>
</feature>
<feature type="region of interest" description="Disordered" evidence="2">
    <location>
        <begin position="603"/>
        <end position="646"/>
    </location>
</feature>
<feature type="compositionally biased region" description="Low complexity" evidence="2">
    <location>
        <begin position="618"/>
        <end position="627"/>
    </location>
</feature>
<feature type="modified residue" description="Phosphothreonine; by autocatalysis" evidence="1">
    <location>
        <position position="198"/>
    </location>
</feature>